<dbReference type="EC" id="2.1.-.-" evidence="1"/>
<dbReference type="EMBL" id="AL513382">
    <property type="protein sequence ID" value="CAD08273.1"/>
    <property type="molecule type" value="Genomic_DNA"/>
</dbReference>
<dbReference type="EMBL" id="AE014613">
    <property type="protein sequence ID" value="AAO69394.1"/>
    <property type="molecule type" value="Genomic_DNA"/>
</dbReference>
<dbReference type="RefSeq" id="NP_455643.1">
    <property type="nucleotide sequence ID" value="NC_003198.1"/>
</dbReference>
<dbReference type="RefSeq" id="WP_000100054.1">
    <property type="nucleotide sequence ID" value="NZ_WSUR01000018.1"/>
</dbReference>
<dbReference type="STRING" id="220341.gene:17585153"/>
<dbReference type="KEGG" id="stt:t1771"/>
<dbReference type="KEGG" id="sty:STY1186"/>
<dbReference type="PATRIC" id="fig|220341.7.peg.1187"/>
<dbReference type="eggNOG" id="COG1835">
    <property type="taxonomic scope" value="Bacteria"/>
</dbReference>
<dbReference type="HOGENOM" id="CLU_036182_2_0_6"/>
<dbReference type="OMA" id="AEWLQWP"/>
<dbReference type="OrthoDB" id="341887at2"/>
<dbReference type="UniPathway" id="UPA00637"/>
<dbReference type="Proteomes" id="UP000000541">
    <property type="component" value="Chromosome"/>
</dbReference>
<dbReference type="Proteomes" id="UP000002670">
    <property type="component" value="Chromosome"/>
</dbReference>
<dbReference type="GO" id="GO:0005886">
    <property type="term" value="C:plasma membrane"/>
    <property type="evidence" value="ECO:0007669"/>
    <property type="project" value="UniProtKB-SubCell"/>
</dbReference>
<dbReference type="GO" id="GO:0016747">
    <property type="term" value="F:acyltransferase activity, transferring groups other than amino-acyl groups"/>
    <property type="evidence" value="ECO:0007669"/>
    <property type="project" value="InterPro"/>
</dbReference>
<dbReference type="GO" id="GO:0016741">
    <property type="term" value="F:transferase activity, transferring one-carbon groups"/>
    <property type="evidence" value="ECO:0007669"/>
    <property type="project" value="UniProtKB-UniRule"/>
</dbReference>
<dbReference type="GO" id="GO:0009250">
    <property type="term" value="P:glucan biosynthetic process"/>
    <property type="evidence" value="ECO:0007669"/>
    <property type="project" value="UniProtKB-UniRule"/>
</dbReference>
<dbReference type="HAMAP" id="MF_01066">
    <property type="entry name" value="MdoC_OpgC"/>
    <property type="match status" value="1"/>
</dbReference>
<dbReference type="InterPro" id="IPR002656">
    <property type="entry name" value="Acyl_transf_3_dom"/>
</dbReference>
<dbReference type="InterPro" id="IPR050623">
    <property type="entry name" value="Glucan_succinyl_AcylTrfase"/>
</dbReference>
<dbReference type="InterPro" id="IPR023723">
    <property type="entry name" value="Glucans_biosynth_C"/>
</dbReference>
<dbReference type="NCBIfam" id="NF003014">
    <property type="entry name" value="PRK03854.1"/>
    <property type="match status" value="1"/>
</dbReference>
<dbReference type="PANTHER" id="PTHR36927">
    <property type="entry name" value="BLR4337 PROTEIN"/>
    <property type="match status" value="1"/>
</dbReference>
<dbReference type="PANTHER" id="PTHR36927:SF3">
    <property type="entry name" value="GLUCANS BIOSYNTHESIS PROTEIN C"/>
    <property type="match status" value="1"/>
</dbReference>
<dbReference type="Pfam" id="PF01757">
    <property type="entry name" value="Acyl_transf_3"/>
    <property type="match status" value="1"/>
</dbReference>
<protein>
    <recommendedName>
        <fullName evidence="1">Glucans biosynthesis protein C</fullName>
        <ecNumber evidence="1">2.1.-.-</ecNumber>
    </recommendedName>
</protein>
<organism>
    <name type="scientific">Salmonella typhi</name>
    <dbReference type="NCBI Taxonomy" id="90370"/>
    <lineage>
        <taxon>Bacteria</taxon>
        <taxon>Pseudomonadati</taxon>
        <taxon>Pseudomonadota</taxon>
        <taxon>Gammaproteobacteria</taxon>
        <taxon>Enterobacterales</taxon>
        <taxon>Enterobacteriaceae</taxon>
        <taxon>Salmonella</taxon>
    </lineage>
</organism>
<evidence type="ECO:0000255" key="1">
    <source>
        <dbReference type="HAMAP-Rule" id="MF_01066"/>
    </source>
</evidence>
<reference key="1">
    <citation type="journal article" date="2001" name="Nature">
        <title>Complete genome sequence of a multiple drug resistant Salmonella enterica serovar Typhi CT18.</title>
        <authorList>
            <person name="Parkhill J."/>
            <person name="Dougan G."/>
            <person name="James K.D."/>
            <person name="Thomson N.R."/>
            <person name="Pickard D."/>
            <person name="Wain J."/>
            <person name="Churcher C.M."/>
            <person name="Mungall K.L."/>
            <person name="Bentley S.D."/>
            <person name="Holden M.T.G."/>
            <person name="Sebaihia M."/>
            <person name="Baker S."/>
            <person name="Basham D."/>
            <person name="Brooks K."/>
            <person name="Chillingworth T."/>
            <person name="Connerton P."/>
            <person name="Cronin A."/>
            <person name="Davis P."/>
            <person name="Davies R.M."/>
            <person name="Dowd L."/>
            <person name="White N."/>
            <person name="Farrar J."/>
            <person name="Feltwell T."/>
            <person name="Hamlin N."/>
            <person name="Haque A."/>
            <person name="Hien T.T."/>
            <person name="Holroyd S."/>
            <person name="Jagels K."/>
            <person name="Krogh A."/>
            <person name="Larsen T.S."/>
            <person name="Leather S."/>
            <person name="Moule S."/>
            <person name="O'Gaora P."/>
            <person name="Parry C."/>
            <person name="Quail M.A."/>
            <person name="Rutherford K.M."/>
            <person name="Simmonds M."/>
            <person name="Skelton J."/>
            <person name="Stevens K."/>
            <person name="Whitehead S."/>
            <person name="Barrell B.G."/>
        </authorList>
    </citation>
    <scope>NUCLEOTIDE SEQUENCE [LARGE SCALE GENOMIC DNA]</scope>
    <source>
        <strain>CT18</strain>
    </source>
</reference>
<reference key="2">
    <citation type="journal article" date="2003" name="J. Bacteriol.">
        <title>Comparative genomics of Salmonella enterica serovar Typhi strains Ty2 and CT18.</title>
        <authorList>
            <person name="Deng W."/>
            <person name="Liou S.-R."/>
            <person name="Plunkett G. III"/>
            <person name="Mayhew G.F."/>
            <person name="Rose D.J."/>
            <person name="Burland V."/>
            <person name="Kodoyianni V."/>
            <person name="Schwartz D.C."/>
            <person name="Blattner F.R."/>
        </authorList>
    </citation>
    <scope>NUCLEOTIDE SEQUENCE [LARGE SCALE GENOMIC DNA]</scope>
    <source>
        <strain>ATCC 700931 / Ty2</strain>
    </source>
</reference>
<feature type="chain" id="PRO_0000218054" description="Glucans biosynthesis protein C">
    <location>
        <begin position="1"/>
        <end position="384"/>
    </location>
</feature>
<feature type="transmembrane region" description="Helical" evidence="1">
    <location>
        <begin position="17"/>
        <end position="37"/>
    </location>
</feature>
<feature type="transmembrane region" description="Helical" evidence="1">
    <location>
        <begin position="54"/>
        <end position="74"/>
    </location>
</feature>
<feature type="transmembrane region" description="Helical" evidence="1">
    <location>
        <begin position="91"/>
        <end position="111"/>
    </location>
</feature>
<feature type="transmembrane region" description="Helical" evidence="1">
    <location>
        <begin position="140"/>
        <end position="160"/>
    </location>
</feature>
<feature type="transmembrane region" description="Helical" evidence="1">
    <location>
        <begin position="173"/>
        <end position="193"/>
    </location>
</feature>
<feature type="transmembrane region" description="Helical" evidence="1">
    <location>
        <begin position="212"/>
        <end position="232"/>
    </location>
</feature>
<feature type="transmembrane region" description="Helical" evidence="1">
    <location>
        <begin position="240"/>
        <end position="260"/>
    </location>
</feature>
<feature type="transmembrane region" description="Helical" evidence="1">
    <location>
        <begin position="274"/>
        <end position="294"/>
    </location>
</feature>
<feature type="transmembrane region" description="Helical" evidence="1">
    <location>
        <begin position="311"/>
        <end position="331"/>
    </location>
</feature>
<feature type="transmembrane region" description="Helical" evidence="1">
    <location>
        <begin position="338"/>
        <end position="358"/>
    </location>
</feature>
<proteinExistence type="inferred from homology"/>
<accession>Q8Z7L9</accession>
<gene>
    <name evidence="1" type="primary">mdoC</name>
    <name evidence="1" type="synonym">opgC</name>
    <name type="ordered locus">STY1186</name>
    <name type="ordered locus">t1771</name>
</gene>
<keyword id="KW-0012">Acyltransferase</keyword>
<keyword id="KW-1003">Cell membrane</keyword>
<keyword id="KW-0472">Membrane</keyword>
<keyword id="KW-0808">Transferase</keyword>
<keyword id="KW-0812">Transmembrane</keyword>
<keyword id="KW-1133">Transmembrane helix</keyword>
<sequence length="384" mass="44213">MSSVPAPREYFLDSIRAWLMLLGIPFHISLIYSTHSWHVNSAAPSWWLTLFNDFIHAFRMQVFFVISGYFSYMLFLRYPLKHWWKVRVERVGIPMLTAIPLLTLPQFILLQYVKEKTENWPTLSAYEKYNTLAWELISHLWFLLVLVILTTVSIGIFTWFQKRQETSKPRPAAISLAKLSLIFFLLGVAYAAIRRIIFIVYPAILSDGMFNFIVMQTLFYVPFFILGALAFIHPDLKARFTTPSRGCTLGAAVAFIAYLLNQRYGSGDAWMYETESVITMVMGLWMVNVVFSLGHRLLNFQSARVTYFVNASLFIYLVHHPLTLFFGAYITPHISSNLIGFLCGLIFVMGIALILYEIHLRIPLLKFLFSGKPPVKQESRAAIG</sequence>
<name>OPGC_SALTI</name>
<comment type="function">
    <text evidence="1">Necessary for the succinyl substitution of periplasmic glucans. Could catalyze the transfer of succinyl residues from the cytoplasmic side of the membrane to the nascent glucan backbones on the periplasmic side of the membrane.</text>
</comment>
<comment type="pathway">
    <text evidence="1">Glycan metabolism; osmoregulated periplasmic glucan (OPG) biosynthesis.</text>
</comment>
<comment type="subcellular location">
    <subcellularLocation>
        <location evidence="1">Cell membrane</location>
        <topology evidence="1">Multi-pass membrane protein</topology>
    </subcellularLocation>
</comment>
<comment type="similarity">
    <text evidence="1">Belongs to the acyltransferase 3 family. OpgC subfamily.</text>
</comment>